<sequence length="524" mass="60081">MSAEVEYLQHEDYLYRTIKLKEIRELGINPYPYQYADCVEVQEIRNRVVDNELGDSEAAFRKETPKVRFAGRLVLFRSMGKNAFGQILDRDAKIQVMFNRDFSQVAGLPADSEISSIKFIEKKLDLGDILGIDGYLFFTHSGELTVLVETVTLLCKSLISLPDKHSGLADKEIRYRKRWADLISSEEVRKTFLARSRILKLIREYMDQQDFLEVETPVLQTIYGGAEATPFVTTLKALHTEMFLRISLEIALKKILVGGMSRVYEIGKVFRNEGIDRTHNPEFTMIEAYAAYWDYNDVMKCVENLVEYVVRALNNGETKVQYSHLKSGPQIVDFKAPWIRMTMKESISVYGGVDVDQYSEHELRDILKTRTALPEKAYVSATRGEMIALLFDELVCDKLIAPHHITDHPLETTPLCKTLRSGDETLVERFESFCLGKELCNAYSELNDPLQQRKLLEEQMRKKALNPDSEYHPIDEEFLEALCQGMPPAGGFGIGIDRLVMMLTDAASIRDVLYFPVMRRIESK</sequence>
<reference key="1">
    <citation type="journal article" date="2000" name="Nucleic Acids Res.">
        <title>Genome sequences of Chlamydia trachomatis MoPn and Chlamydia pneumoniae AR39.</title>
        <authorList>
            <person name="Read T.D."/>
            <person name="Brunham R.C."/>
            <person name="Shen C."/>
            <person name="Gill S.R."/>
            <person name="Heidelberg J.F."/>
            <person name="White O."/>
            <person name="Hickey E.K."/>
            <person name="Peterson J.D."/>
            <person name="Utterback T.R."/>
            <person name="Berry K.J."/>
            <person name="Bass S."/>
            <person name="Linher K.D."/>
            <person name="Weidman J.F."/>
            <person name="Khouri H.M."/>
            <person name="Craven B."/>
            <person name="Bowman C."/>
            <person name="Dodson R.J."/>
            <person name="Gwinn M.L."/>
            <person name="Nelson W.C."/>
            <person name="DeBoy R.T."/>
            <person name="Kolonay J.F."/>
            <person name="McClarty G."/>
            <person name="Salzberg S.L."/>
            <person name="Eisen J.A."/>
            <person name="Fraser C.M."/>
        </authorList>
    </citation>
    <scope>NUCLEOTIDE SEQUENCE [LARGE SCALE GENOMIC DNA]</scope>
    <source>
        <strain>MoPn / Nigg</strain>
    </source>
</reference>
<evidence type="ECO:0000250" key="1"/>
<evidence type="ECO:0000305" key="2"/>
<accession>Q9PLE1</accession>
<gene>
    <name type="primary">lysS</name>
    <name type="ordered locus">TC_0163</name>
</gene>
<protein>
    <recommendedName>
        <fullName>Lysine--tRNA ligase</fullName>
        <ecNumber>6.1.1.6</ecNumber>
    </recommendedName>
    <alternativeName>
        <fullName>Lysyl-tRNA synthetase</fullName>
        <shortName>LysRS</shortName>
    </alternativeName>
</protein>
<organism>
    <name type="scientific">Chlamydia muridarum (strain MoPn / Nigg)</name>
    <dbReference type="NCBI Taxonomy" id="243161"/>
    <lineage>
        <taxon>Bacteria</taxon>
        <taxon>Pseudomonadati</taxon>
        <taxon>Chlamydiota</taxon>
        <taxon>Chlamydiia</taxon>
        <taxon>Chlamydiales</taxon>
        <taxon>Chlamydiaceae</taxon>
        <taxon>Chlamydia/Chlamydophila group</taxon>
        <taxon>Chlamydia</taxon>
    </lineage>
</organism>
<dbReference type="EC" id="6.1.1.6"/>
<dbReference type="EMBL" id="AE002160">
    <property type="protein sequence ID" value="AAF39039.1"/>
    <property type="molecule type" value="Genomic_DNA"/>
</dbReference>
<dbReference type="PIR" id="H81734">
    <property type="entry name" value="H81734"/>
</dbReference>
<dbReference type="RefSeq" id="WP_010229564.1">
    <property type="nucleotide sequence ID" value="NZ_CP063055.1"/>
</dbReference>
<dbReference type="SMR" id="Q9PLE1"/>
<dbReference type="GeneID" id="1245697"/>
<dbReference type="KEGG" id="cmu:TC_0163"/>
<dbReference type="eggNOG" id="COG1190">
    <property type="taxonomic scope" value="Bacteria"/>
</dbReference>
<dbReference type="HOGENOM" id="CLU_008255_6_0_0"/>
<dbReference type="OrthoDB" id="9802326at2"/>
<dbReference type="Proteomes" id="UP000000800">
    <property type="component" value="Chromosome"/>
</dbReference>
<dbReference type="GO" id="GO:0005829">
    <property type="term" value="C:cytosol"/>
    <property type="evidence" value="ECO:0007669"/>
    <property type="project" value="TreeGrafter"/>
</dbReference>
<dbReference type="GO" id="GO:0005524">
    <property type="term" value="F:ATP binding"/>
    <property type="evidence" value="ECO:0007669"/>
    <property type="project" value="UniProtKB-UniRule"/>
</dbReference>
<dbReference type="GO" id="GO:0004824">
    <property type="term" value="F:lysine-tRNA ligase activity"/>
    <property type="evidence" value="ECO:0007669"/>
    <property type="project" value="UniProtKB-UniRule"/>
</dbReference>
<dbReference type="GO" id="GO:0000287">
    <property type="term" value="F:magnesium ion binding"/>
    <property type="evidence" value="ECO:0007669"/>
    <property type="project" value="UniProtKB-UniRule"/>
</dbReference>
<dbReference type="GO" id="GO:0000049">
    <property type="term" value="F:tRNA binding"/>
    <property type="evidence" value="ECO:0007669"/>
    <property type="project" value="TreeGrafter"/>
</dbReference>
<dbReference type="GO" id="GO:0006430">
    <property type="term" value="P:lysyl-tRNA aminoacylation"/>
    <property type="evidence" value="ECO:0007669"/>
    <property type="project" value="UniProtKB-UniRule"/>
</dbReference>
<dbReference type="CDD" id="cd04322">
    <property type="entry name" value="LysRS_N"/>
    <property type="match status" value="1"/>
</dbReference>
<dbReference type="FunFam" id="2.40.50.140:FF:000024">
    <property type="entry name" value="Lysine--tRNA ligase"/>
    <property type="match status" value="1"/>
</dbReference>
<dbReference type="FunFam" id="3.30.930.10:FF:000165">
    <property type="entry name" value="Lysine--tRNA ligase"/>
    <property type="match status" value="1"/>
</dbReference>
<dbReference type="Gene3D" id="3.30.930.10">
    <property type="entry name" value="Bira Bifunctional Protein, Domain 2"/>
    <property type="match status" value="1"/>
</dbReference>
<dbReference type="Gene3D" id="2.40.50.140">
    <property type="entry name" value="Nucleic acid-binding proteins"/>
    <property type="match status" value="1"/>
</dbReference>
<dbReference type="HAMAP" id="MF_00252">
    <property type="entry name" value="Lys_tRNA_synth_class2"/>
    <property type="match status" value="1"/>
</dbReference>
<dbReference type="InterPro" id="IPR004364">
    <property type="entry name" value="Aa-tRNA-synt_II"/>
</dbReference>
<dbReference type="InterPro" id="IPR006195">
    <property type="entry name" value="aa-tRNA-synth_II"/>
</dbReference>
<dbReference type="InterPro" id="IPR045864">
    <property type="entry name" value="aa-tRNA-synth_II/BPL/LPL"/>
</dbReference>
<dbReference type="InterPro" id="IPR002313">
    <property type="entry name" value="Lys-tRNA-ligase_II"/>
</dbReference>
<dbReference type="InterPro" id="IPR044136">
    <property type="entry name" value="Lys-tRNA-ligase_II_N"/>
</dbReference>
<dbReference type="InterPro" id="IPR018149">
    <property type="entry name" value="Lys-tRNA-synth_II_C"/>
</dbReference>
<dbReference type="InterPro" id="IPR012340">
    <property type="entry name" value="NA-bd_OB-fold"/>
</dbReference>
<dbReference type="InterPro" id="IPR004365">
    <property type="entry name" value="NA-bd_OB_tRNA"/>
</dbReference>
<dbReference type="NCBIfam" id="TIGR00499">
    <property type="entry name" value="lysS_bact"/>
    <property type="match status" value="1"/>
</dbReference>
<dbReference type="NCBIfam" id="NF001756">
    <property type="entry name" value="PRK00484.1"/>
    <property type="match status" value="1"/>
</dbReference>
<dbReference type="PANTHER" id="PTHR42918:SF15">
    <property type="entry name" value="LYSINE--TRNA LIGASE, CHLOROPLASTIC_MITOCHONDRIAL"/>
    <property type="match status" value="1"/>
</dbReference>
<dbReference type="PANTHER" id="PTHR42918">
    <property type="entry name" value="LYSYL-TRNA SYNTHETASE"/>
    <property type="match status" value="1"/>
</dbReference>
<dbReference type="Pfam" id="PF00152">
    <property type="entry name" value="tRNA-synt_2"/>
    <property type="match status" value="1"/>
</dbReference>
<dbReference type="Pfam" id="PF01336">
    <property type="entry name" value="tRNA_anti-codon"/>
    <property type="match status" value="1"/>
</dbReference>
<dbReference type="PRINTS" id="PR00982">
    <property type="entry name" value="TRNASYNTHLYS"/>
</dbReference>
<dbReference type="SUPFAM" id="SSF55681">
    <property type="entry name" value="Class II aaRS and biotin synthetases"/>
    <property type="match status" value="1"/>
</dbReference>
<dbReference type="SUPFAM" id="SSF50249">
    <property type="entry name" value="Nucleic acid-binding proteins"/>
    <property type="match status" value="1"/>
</dbReference>
<dbReference type="PROSITE" id="PS50862">
    <property type="entry name" value="AA_TRNA_LIGASE_II"/>
    <property type="match status" value="1"/>
</dbReference>
<feature type="chain" id="PRO_0000152612" description="Lysine--tRNA ligase">
    <location>
        <begin position="1"/>
        <end position="524"/>
    </location>
</feature>
<feature type="binding site" evidence="1">
    <location>
        <position position="431"/>
    </location>
    <ligand>
        <name>Mg(2+)</name>
        <dbReference type="ChEBI" id="CHEBI:18420"/>
        <label>1</label>
    </ligand>
</feature>
<feature type="binding site" evidence="1">
    <location>
        <position position="438"/>
    </location>
    <ligand>
        <name>Mg(2+)</name>
        <dbReference type="ChEBI" id="CHEBI:18420"/>
        <label>1</label>
    </ligand>
</feature>
<feature type="binding site" evidence="1">
    <location>
        <position position="438"/>
    </location>
    <ligand>
        <name>Mg(2+)</name>
        <dbReference type="ChEBI" id="CHEBI:18420"/>
        <label>2</label>
    </ligand>
</feature>
<name>SYK_CHLMU</name>
<comment type="catalytic activity">
    <reaction>
        <text>tRNA(Lys) + L-lysine + ATP = L-lysyl-tRNA(Lys) + AMP + diphosphate</text>
        <dbReference type="Rhea" id="RHEA:20792"/>
        <dbReference type="Rhea" id="RHEA-COMP:9696"/>
        <dbReference type="Rhea" id="RHEA-COMP:9697"/>
        <dbReference type="ChEBI" id="CHEBI:30616"/>
        <dbReference type="ChEBI" id="CHEBI:32551"/>
        <dbReference type="ChEBI" id="CHEBI:33019"/>
        <dbReference type="ChEBI" id="CHEBI:78442"/>
        <dbReference type="ChEBI" id="CHEBI:78529"/>
        <dbReference type="ChEBI" id="CHEBI:456215"/>
        <dbReference type="EC" id="6.1.1.6"/>
    </reaction>
</comment>
<comment type="cofactor">
    <cofactor evidence="1">
        <name>Mg(2+)</name>
        <dbReference type="ChEBI" id="CHEBI:18420"/>
    </cofactor>
    <text evidence="1">Binds 3 Mg(2+) ions per subunit.</text>
</comment>
<comment type="subunit">
    <text evidence="1">Homodimer.</text>
</comment>
<comment type="subcellular location">
    <subcellularLocation>
        <location evidence="1">Cytoplasm</location>
    </subcellularLocation>
</comment>
<comment type="similarity">
    <text evidence="2">Belongs to the class-II aminoacyl-tRNA synthetase family.</text>
</comment>
<keyword id="KW-0030">Aminoacyl-tRNA synthetase</keyword>
<keyword id="KW-0067">ATP-binding</keyword>
<keyword id="KW-0963">Cytoplasm</keyword>
<keyword id="KW-0436">Ligase</keyword>
<keyword id="KW-0460">Magnesium</keyword>
<keyword id="KW-0479">Metal-binding</keyword>
<keyword id="KW-0547">Nucleotide-binding</keyword>
<keyword id="KW-0648">Protein biosynthesis</keyword>
<proteinExistence type="inferred from homology"/>